<keyword id="KW-0131">Cell cycle</keyword>
<keyword id="KW-0132">Cell division</keyword>
<keyword id="KW-0997">Cell inner membrane</keyword>
<keyword id="KW-1003">Cell membrane</keyword>
<keyword id="KW-0133">Cell shape</keyword>
<keyword id="KW-0961">Cell wall biogenesis/degradation</keyword>
<keyword id="KW-0460">Magnesium</keyword>
<keyword id="KW-0472">Membrane</keyword>
<keyword id="KW-0479">Metal-binding</keyword>
<keyword id="KW-0573">Peptidoglycan synthesis</keyword>
<keyword id="KW-1185">Reference proteome</keyword>
<keyword id="KW-0808">Transferase</keyword>
<keyword id="KW-0812">Transmembrane</keyword>
<keyword id="KW-1133">Transmembrane helix</keyword>
<organism>
    <name type="scientific">Proteus mirabilis (strain HI4320)</name>
    <dbReference type="NCBI Taxonomy" id="529507"/>
    <lineage>
        <taxon>Bacteria</taxon>
        <taxon>Pseudomonadati</taxon>
        <taxon>Pseudomonadota</taxon>
        <taxon>Gammaproteobacteria</taxon>
        <taxon>Enterobacterales</taxon>
        <taxon>Morganellaceae</taxon>
        <taxon>Proteus</taxon>
    </lineage>
</organism>
<sequence>MLVWLAEYLVKYHTFFNVFSYLTFRAIVGLLTALIIALWMGPHLIAWLQKMQIGQVVRNEGPESHFSKRGTPTMGGIMILFSIAVSTLLWARLDNPYVWCVLLVLIGYGIIGFIDDYRKVVRKDTRGLIARWKYFWQSVLALAVAFSMYAIGKDTPATQLVVPFFKDVMPQLGMLYILLAYFVIVGTSNAVNLTDGLDGLAIMPTVFVAAGFALVAWATGNVNFASYLKIPYLMHAGELVIVCTAIVGAGLGFLWFNTYPAQVFMGDVGSLALGGALGTIAVLLRQEFLLVIMGGVFVVETLSVILQVGSFKLRGQRIFRMAPIHHHYELKGWPEPRVIVRFWIISLMLVLIGLATLKVR</sequence>
<proteinExistence type="inferred from homology"/>
<reference key="1">
    <citation type="journal article" date="2008" name="J. Bacteriol.">
        <title>Complete genome sequence of uropathogenic Proteus mirabilis, a master of both adherence and motility.</title>
        <authorList>
            <person name="Pearson M.M."/>
            <person name="Sebaihia M."/>
            <person name="Churcher C."/>
            <person name="Quail M.A."/>
            <person name="Seshasayee A.S."/>
            <person name="Luscombe N.M."/>
            <person name="Abdellah Z."/>
            <person name="Arrosmith C."/>
            <person name="Atkin B."/>
            <person name="Chillingworth T."/>
            <person name="Hauser H."/>
            <person name="Jagels K."/>
            <person name="Moule S."/>
            <person name="Mungall K."/>
            <person name="Norbertczak H."/>
            <person name="Rabbinowitsch E."/>
            <person name="Walker D."/>
            <person name="Whithead S."/>
            <person name="Thomson N.R."/>
            <person name="Rather P.N."/>
            <person name="Parkhill J."/>
            <person name="Mobley H.L.T."/>
        </authorList>
    </citation>
    <scope>NUCLEOTIDE SEQUENCE [LARGE SCALE GENOMIC DNA]</scope>
    <source>
        <strain>HI4320</strain>
    </source>
</reference>
<accession>B4F114</accession>
<comment type="function">
    <text evidence="1">Catalyzes the initial step of the lipid cycle reactions in the biosynthesis of the cell wall peptidoglycan: transfers peptidoglycan precursor phospho-MurNAc-pentapeptide from UDP-MurNAc-pentapeptide onto the lipid carrier undecaprenyl phosphate, yielding undecaprenyl-pyrophosphoryl-MurNAc-pentapeptide, known as lipid I.</text>
</comment>
<comment type="catalytic activity">
    <reaction evidence="1">
        <text>UDP-N-acetyl-alpha-D-muramoyl-L-alanyl-gamma-D-glutamyl-meso-2,6-diaminopimeloyl-D-alanyl-D-alanine + di-trans,octa-cis-undecaprenyl phosphate = di-trans,octa-cis-undecaprenyl diphospho-N-acetyl-alpha-D-muramoyl-L-alanyl-D-glutamyl-meso-2,6-diaminopimeloyl-D-alanyl-D-alanine + UMP</text>
        <dbReference type="Rhea" id="RHEA:28386"/>
        <dbReference type="ChEBI" id="CHEBI:57865"/>
        <dbReference type="ChEBI" id="CHEBI:60392"/>
        <dbReference type="ChEBI" id="CHEBI:61386"/>
        <dbReference type="ChEBI" id="CHEBI:61387"/>
        <dbReference type="EC" id="2.7.8.13"/>
    </reaction>
</comment>
<comment type="cofactor">
    <cofactor evidence="1">
        <name>Mg(2+)</name>
        <dbReference type="ChEBI" id="CHEBI:18420"/>
    </cofactor>
</comment>
<comment type="pathway">
    <text evidence="1">Cell wall biogenesis; peptidoglycan biosynthesis.</text>
</comment>
<comment type="subcellular location">
    <subcellularLocation>
        <location evidence="1">Cell inner membrane</location>
        <topology evidence="1">Multi-pass membrane protein</topology>
    </subcellularLocation>
</comment>
<comment type="similarity">
    <text evidence="1">Belongs to the glycosyltransferase 4 family. MraY subfamily.</text>
</comment>
<evidence type="ECO:0000255" key="1">
    <source>
        <dbReference type="HAMAP-Rule" id="MF_00038"/>
    </source>
</evidence>
<gene>
    <name evidence="1" type="primary">mraY</name>
    <name type="ordered locus">PMI2073</name>
</gene>
<dbReference type="EC" id="2.7.8.13" evidence="1"/>
<dbReference type="EMBL" id="AM942759">
    <property type="protein sequence ID" value="CAR44152.1"/>
    <property type="molecule type" value="Genomic_DNA"/>
</dbReference>
<dbReference type="RefSeq" id="WP_004248563.1">
    <property type="nucleotide sequence ID" value="NC_010554.1"/>
</dbReference>
<dbReference type="SMR" id="B4F114"/>
<dbReference type="EnsemblBacteria" id="CAR44152">
    <property type="protein sequence ID" value="CAR44152"/>
    <property type="gene ID" value="PMI2073"/>
</dbReference>
<dbReference type="GeneID" id="6801861"/>
<dbReference type="KEGG" id="pmr:PMI2073"/>
<dbReference type="eggNOG" id="COG0472">
    <property type="taxonomic scope" value="Bacteria"/>
</dbReference>
<dbReference type="HOGENOM" id="CLU_023982_0_0_6"/>
<dbReference type="UniPathway" id="UPA00219"/>
<dbReference type="Proteomes" id="UP000008319">
    <property type="component" value="Chromosome"/>
</dbReference>
<dbReference type="GO" id="GO:0005886">
    <property type="term" value="C:plasma membrane"/>
    <property type="evidence" value="ECO:0007669"/>
    <property type="project" value="UniProtKB-SubCell"/>
</dbReference>
<dbReference type="GO" id="GO:0046872">
    <property type="term" value="F:metal ion binding"/>
    <property type="evidence" value="ECO:0007669"/>
    <property type="project" value="UniProtKB-KW"/>
</dbReference>
<dbReference type="GO" id="GO:0008963">
    <property type="term" value="F:phospho-N-acetylmuramoyl-pentapeptide-transferase activity"/>
    <property type="evidence" value="ECO:0007669"/>
    <property type="project" value="UniProtKB-UniRule"/>
</dbReference>
<dbReference type="GO" id="GO:0051992">
    <property type="term" value="F:UDP-N-acetylmuramoyl-L-alanyl-D-glutamyl-meso-2,6-diaminopimelyl-D-alanyl-D-alanine:undecaprenyl-phosphate transferase activity"/>
    <property type="evidence" value="ECO:0007669"/>
    <property type="project" value="RHEA"/>
</dbReference>
<dbReference type="GO" id="GO:0051301">
    <property type="term" value="P:cell division"/>
    <property type="evidence" value="ECO:0007669"/>
    <property type="project" value="UniProtKB-KW"/>
</dbReference>
<dbReference type="GO" id="GO:0071555">
    <property type="term" value="P:cell wall organization"/>
    <property type="evidence" value="ECO:0007669"/>
    <property type="project" value="UniProtKB-KW"/>
</dbReference>
<dbReference type="GO" id="GO:0009252">
    <property type="term" value="P:peptidoglycan biosynthetic process"/>
    <property type="evidence" value="ECO:0007669"/>
    <property type="project" value="UniProtKB-UniRule"/>
</dbReference>
<dbReference type="GO" id="GO:0008360">
    <property type="term" value="P:regulation of cell shape"/>
    <property type="evidence" value="ECO:0007669"/>
    <property type="project" value="UniProtKB-KW"/>
</dbReference>
<dbReference type="CDD" id="cd06852">
    <property type="entry name" value="GT_MraY"/>
    <property type="match status" value="1"/>
</dbReference>
<dbReference type="HAMAP" id="MF_00038">
    <property type="entry name" value="MraY"/>
    <property type="match status" value="1"/>
</dbReference>
<dbReference type="InterPro" id="IPR000715">
    <property type="entry name" value="Glycosyl_transferase_4"/>
</dbReference>
<dbReference type="InterPro" id="IPR003524">
    <property type="entry name" value="PNAcMuramoyl-5peptid_Trfase"/>
</dbReference>
<dbReference type="InterPro" id="IPR018480">
    <property type="entry name" value="PNAcMuramoyl-5peptid_Trfase_CS"/>
</dbReference>
<dbReference type="NCBIfam" id="TIGR00445">
    <property type="entry name" value="mraY"/>
    <property type="match status" value="1"/>
</dbReference>
<dbReference type="PANTHER" id="PTHR22926">
    <property type="entry name" value="PHOSPHO-N-ACETYLMURAMOYL-PENTAPEPTIDE-TRANSFERASE"/>
    <property type="match status" value="1"/>
</dbReference>
<dbReference type="PANTHER" id="PTHR22926:SF5">
    <property type="entry name" value="PHOSPHO-N-ACETYLMURAMOYL-PENTAPEPTIDE-TRANSFERASE HOMOLOG"/>
    <property type="match status" value="1"/>
</dbReference>
<dbReference type="Pfam" id="PF00953">
    <property type="entry name" value="Glycos_transf_4"/>
    <property type="match status" value="1"/>
</dbReference>
<dbReference type="Pfam" id="PF10555">
    <property type="entry name" value="MraY_sig1"/>
    <property type="match status" value="1"/>
</dbReference>
<dbReference type="PROSITE" id="PS01347">
    <property type="entry name" value="MRAY_1"/>
    <property type="match status" value="1"/>
</dbReference>
<dbReference type="PROSITE" id="PS01348">
    <property type="entry name" value="MRAY_2"/>
    <property type="match status" value="1"/>
</dbReference>
<feature type="chain" id="PRO_1000090658" description="Phospho-N-acetylmuramoyl-pentapeptide-transferase">
    <location>
        <begin position="1"/>
        <end position="360"/>
    </location>
</feature>
<feature type="transmembrane region" description="Helical" evidence="1">
    <location>
        <begin position="27"/>
        <end position="47"/>
    </location>
</feature>
<feature type="transmembrane region" description="Helical" evidence="1">
    <location>
        <begin position="71"/>
        <end position="91"/>
    </location>
</feature>
<feature type="transmembrane region" description="Helical" evidence="1">
    <location>
        <begin position="97"/>
        <end position="117"/>
    </location>
</feature>
<feature type="transmembrane region" description="Helical" evidence="1">
    <location>
        <begin position="132"/>
        <end position="152"/>
    </location>
</feature>
<feature type="transmembrane region" description="Helical" evidence="1">
    <location>
        <begin position="168"/>
        <end position="188"/>
    </location>
</feature>
<feature type="transmembrane region" description="Helical" evidence="1">
    <location>
        <begin position="199"/>
        <end position="219"/>
    </location>
</feature>
<feature type="transmembrane region" description="Helical" evidence="1">
    <location>
        <begin position="236"/>
        <end position="256"/>
    </location>
</feature>
<feature type="transmembrane region" description="Helical" evidence="1">
    <location>
        <begin position="263"/>
        <end position="283"/>
    </location>
</feature>
<feature type="transmembrane region" description="Helical" evidence="1">
    <location>
        <begin position="288"/>
        <end position="308"/>
    </location>
</feature>
<feature type="transmembrane region" description="Helical" evidence="1">
    <location>
        <begin position="338"/>
        <end position="358"/>
    </location>
</feature>
<name>MRAY_PROMH</name>
<protein>
    <recommendedName>
        <fullName evidence="1">Phospho-N-acetylmuramoyl-pentapeptide-transferase</fullName>
        <ecNumber evidence="1">2.7.8.13</ecNumber>
    </recommendedName>
    <alternativeName>
        <fullName evidence="1">UDP-MurNAc-pentapeptide phosphotransferase</fullName>
    </alternativeName>
</protein>